<feature type="chain" id="PRO_0000250248" description="Undecaprenyl-diphosphatase">
    <location>
        <begin position="1"/>
        <end position="270"/>
    </location>
</feature>
<feature type="transmembrane region" description="Helical" evidence="1">
    <location>
        <begin position="3"/>
        <end position="23"/>
    </location>
</feature>
<feature type="transmembrane region" description="Helical" evidence="1">
    <location>
        <begin position="42"/>
        <end position="62"/>
    </location>
</feature>
<feature type="transmembrane region" description="Helical" evidence="1">
    <location>
        <begin position="86"/>
        <end position="106"/>
    </location>
</feature>
<feature type="transmembrane region" description="Helical" evidence="1">
    <location>
        <begin position="108"/>
        <end position="128"/>
    </location>
</feature>
<feature type="transmembrane region" description="Helical" evidence="1">
    <location>
        <begin position="184"/>
        <end position="204"/>
    </location>
</feature>
<feature type="transmembrane region" description="Helical" evidence="1">
    <location>
        <begin position="217"/>
        <end position="237"/>
    </location>
</feature>
<feature type="transmembrane region" description="Helical" evidence="1">
    <location>
        <begin position="249"/>
        <end position="269"/>
    </location>
</feature>
<proteinExistence type="inferred from homology"/>
<comment type="function">
    <text evidence="1">Catalyzes the dephosphorylation of undecaprenyl diphosphate (UPP). Confers resistance to bacitracin.</text>
</comment>
<comment type="catalytic activity">
    <reaction evidence="1">
        <text>di-trans,octa-cis-undecaprenyl diphosphate + H2O = di-trans,octa-cis-undecaprenyl phosphate + phosphate + H(+)</text>
        <dbReference type="Rhea" id="RHEA:28094"/>
        <dbReference type="ChEBI" id="CHEBI:15377"/>
        <dbReference type="ChEBI" id="CHEBI:15378"/>
        <dbReference type="ChEBI" id="CHEBI:43474"/>
        <dbReference type="ChEBI" id="CHEBI:58405"/>
        <dbReference type="ChEBI" id="CHEBI:60392"/>
        <dbReference type="EC" id="3.6.1.27"/>
    </reaction>
</comment>
<comment type="subcellular location">
    <subcellularLocation>
        <location evidence="1">Cell inner membrane</location>
        <topology evidence="1">Multi-pass membrane protein</topology>
    </subcellularLocation>
</comment>
<comment type="miscellaneous">
    <text>Bacitracin is thought to be involved in the inhibition of peptidoglycan synthesis by sequestering undecaprenyl diphosphate, thereby reducing the pool of lipid carrier available.</text>
</comment>
<comment type="similarity">
    <text evidence="1">Belongs to the UppP family.</text>
</comment>
<sequence>MDTIVTAILLGIVEGLTEFLPVSSTGHLILATELFGYDAHQWAMFNVVIQLGAILAVVVQYWRTFWAVGMGLLRLEPISLRFLRNLLAAFIPSAILGLALKKYIDVLLGSPSVVCWALIAGGIAILVIEKHAKQGEPSGIGQLPLRQAIGVGLAQCLAMVPGVSRSGATIMGALAMGIERRTAAEFSFFLAIPTMLGATTLELLDNRDALLGGTMGVGWSEIGVGFAVSFVVALAVIRLFVAYVSRAGFKPFAWYRIAAGAVALGWLAMR</sequence>
<organism>
    <name type="scientific">Novosphingobium aromaticivorans (strain ATCC 700278 / DSM 12444 / CCUG 56034 / CIP 105152 / NBRC 16084 / F199)</name>
    <dbReference type="NCBI Taxonomy" id="279238"/>
    <lineage>
        <taxon>Bacteria</taxon>
        <taxon>Pseudomonadati</taxon>
        <taxon>Pseudomonadota</taxon>
        <taxon>Alphaproteobacteria</taxon>
        <taxon>Sphingomonadales</taxon>
        <taxon>Sphingomonadaceae</taxon>
        <taxon>Novosphingobium</taxon>
    </lineage>
</organism>
<name>UPPP_NOVAD</name>
<gene>
    <name evidence="1" type="primary">uppP</name>
    <name type="ordered locus">Saro_3184</name>
</gene>
<keyword id="KW-0046">Antibiotic resistance</keyword>
<keyword id="KW-0997">Cell inner membrane</keyword>
<keyword id="KW-1003">Cell membrane</keyword>
<keyword id="KW-0133">Cell shape</keyword>
<keyword id="KW-0961">Cell wall biogenesis/degradation</keyword>
<keyword id="KW-0378">Hydrolase</keyword>
<keyword id="KW-0472">Membrane</keyword>
<keyword id="KW-0573">Peptidoglycan synthesis</keyword>
<keyword id="KW-1185">Reference proteome</keyword>
<keyword id="KW-0812">Transmembrane</keyword>
<keyword id="KW-1133">Transmembrane helix</keyword>
<dbReference type="EC" id="3.6.1.27" evidence="1"/>
<dbReference type="EMBL" id="CP000248">
    <property type="protein sequence ID" value="ABD27619.1"/>
    <property type="molecule type" value="Genomic_DNA"/>
</dbReference>
<dbReference type="RefSeq" id="WP_011446821.1">
    <property type="nucleotide sequence ID" value="NC_007794.1"/>
</dbReference>
<dbReference type="SMR" id="Q2G3F4"/>
<dbReference type="STRING" id="279238.Saro_3184"/>
<dbReference type="KEGG" id="nar:Saro_3184"/>
<dbReference type="eggNOG" id="COG1968">
    <property type="taxonomic scope" value="Bacteria"/>
</dbReference>
<dbReference type="HOGENOM" id="CLU_060296_2_0_5"/>
<dbReference type="Proteomes" id="UP000009134">
    <property type="component" value="Chromosome"/>
</dbReference>
<dbReference type="GO" id="GO:0005886">
    <property type="term" value="C:plasma membrane"/>
    <property type="evidence" value="ECO:0007669"/>
    <property type="project" value="UniProtKB-SubCell"/>
</dbReference>
<dbReference type="GO" id="GO:0050380">
    <property type="term" value="F:undecaprenyl-diphosphatase activity"/>
    <property type="evidence" value="ECO:0007669"/>
    <property type="project" value="UniProtKB-UniRule"/>
</dbReference>
<dbReference type="GO" id="GO:0071555">
    <property type="term" value="P:cell wall organization"/>
    <property type="evidence" value="ECO:0007669"/>
    <property type="project" value="UniProtKB-KW"/>
</dbReference>
<dbReference type="GO" id="GO:0009252">
    <property type="term" value="P:peptidoglycan biosynthetic process"/>
    <property type="evidence" value="ECO:0007669"/>
    <property type="project" value="UniProtKB-KW"/>
</dbReference>
<dbReference type="GO" id="GO:0008360">
    <property type="term" value="P:regulation of cell shape"/>
    <property type="evidence" value="ECO:0007669"/>
    <property type="project" value="UniProtKB-KW"/>
</dbReference>
<dbReference type="GO" id="GO:0046677">
    <property type="term" value="P:response to antibiotic"/>
    <property type="evidence" value="ECO:0007669"/>
    <property type="project" value="UniProtKB-UniRule"/>
</dbReference>
<dbReference type="HAMAP" id="MF_01006">
    <property type="entry name" value="Undec_diphosphatase"/>
    <property type="match status" value="1"/>
</dbReference>
<dbReference type="InterPro" id="IPR003824">
    <property type="entry name" value="UppP"/>
</dbReference>
<dbReference type="NCBIfam" id="NF001389">
    <property type="entry name" value="PRK00281.1-2"/>
    <property type="match status" value="1"/>
</dbReference>
<dbReference type="NCBIfam" id="NF001390">
    <property type="entry name" value="PRK00281.1-4"/>
    <property type="match status" value="1"/>
</dbReference>
<dbReference type="NCBIfam" id="TIGR00753">
    <property type="entry name" value="undec_PP_bacA"/>
    <property type="match status" value="1"/>
</dbReference>
<dbReference type="PANTHER" id="PTHR30622">
    <property type="entry name" value="UNDECAPRENYL-DIPHOSPHATASE"/>
    <property type="match status" value="1"/>
</dbReference>
<dbReference type="PANTHER" id="PTHR30622:SF3">
    <property type="entry name" value="UNDECAPRENYL-DIPHOSPHATASE"/>
    <property type="match status" value="1"/>
</dbReference>
<dbReference type="Pfam" id="PF02673">
    <property type="entry name" value="BacA"/>
    <property type="match status" value="1"/>
</dbReference>
<protein>
    <recommendedName>
        <fullName evidence="1">Undecaprenyl-diphosphatase</fullName>
        <ecNumber evidence="1">3.6.1.27</ecNumber>
    </recommendedName>
    <alternativeName>
        <fullName evidence="1">Bacitracin resistance protein</fullName>
    </alternativeName>
    <alternativeName>
        <fullName evidence="1">Undecaprenyl pyrophosphate phosphatase</fullName>
    </alternativeName>
</protein>
<evidence type="ECO:0000255" key="1">
    <source>
        <dbReference type="HAMAP-Rule" id="MF_01006"/>
    </source>
</evidence>
<accession>Q2G3F4</accession>
<reference key="1">
    <citation type="submission" date="2006-01" db="EMBL/GenBank/DDBJ databases">
        <title>Complete sequence of Novosphingobium aromaticivorans DSM 12444.</title>
        <authorList>
            <consortium name="US DOE Joint Genome Institute"/>
            <person name="Copeland A."/>
            <person name="Lucas S."/>
            <person name="Lapidus A."/>
            <person name="Barry K."/>
            <person name="Detter J.C."/>
            <person name="Glavina T."/>
            <person name="Hammon N."/>
            <person name="Israni S."/>
            <person name="Pitluck S."/>
            <person name="Chain P."/>
            <person name="Malfatti S."/>
            <person name="Shin M."/>
            <person name="Vergez L."/>
            <person name="Schmutz J."/>
            <person name="Larimer F."/>
            <person name="Land M."/>
            <person name="Kyrpides N."/>
            <person name="Ivanova N."/>
            <person name="Fredrickson J."/>
            <person name="Balkwill D."/>
            <person name="Romine M.F."/>
            <person name="Richardson P."/>
        </authorList>
    </citation>
    <scope>NUCLEOTIDE SEQUENCE [LARGE SCALE GENOMIC DNA]</scope>
    <source>
        <strain>ATCC 700278 / DSM 12444 / CCUG 56034 / CIP 105152 / NBRC 16084 / F199</strain>
    </source>
</reference>